<feature type="chain" id="PRO_0000058497" description="Retrovirus-related Pol polyprotein from type-1 retrotransposable element R2">
    <location>
        <begin position="1" status="less than"/>
        <end position="1025"/>
    </location>
</feature>
<feature type="domain" description="Reverse transcriptase" evidence="2">
    <location>
        <begin position="358"/>
        <end position="635"/>
    </location>
</feature>
<feature type="zinc finger region" description="C2H2-type" evidence="1">
    <location>
        <begin position="46"/>
        <end position="69"/>
    </location>
</feature>
<feature type="region of interest" description="Disordered" evidence="3">
    <location>
        <begin position="1"/>
        <end position="38"/>
    </location>
</feature>
<feature type="region of interest" description="Disordered" evidence="3">
    <location>
        <begin position="146"/>
        <end position="172"/>
    </location>
</feature>
<feature type="region of interest" description="Nucleic acid-binding endonuclease">
    <location>
        <begin position="755"/>
        <end position="1025"/>
    </location>
</feature>
<feature type="compositionally biased region" description="Polar residues" evidence="3">
    <location>
        <begin position="1"/>
        <end position="11"/>
    </location>
</feature>
<feature type="compositionally biased region" description="Basic and acidic residues" evidence="3">
    <location>
        <begin position="146"/>
        <end position="158"/>
    </location>
</feature>
<feature type="non-terminal residue">
    <location>
        <position position="1"/>
    </location>
</feature>
<evidence type="ECO:0000255" key="1">
    <source>
        <dbReference type="PROSITE-ProRule" id="PRU00042"/>
    </source>
</evidence>
<evidence type="ECO:0000255" key="2">
    <source>
        <dbReference type="PROSITE-ProRule" id="PRU00405"/>
    </source>
</evidence>
<evidence type="ECO:0000256" key="3">
    <source>
        <dbReference type="SAM" id="MobiDB-lite"/>
    </source>
</evidence>
<proteinExistence type="predicted"/>
<dbReference type="EC" id="2.7.7.49"/>
<dbReference type="EMBL" id="L00950">
    <property type="protein sequence ID" value="AAC34927.1"/>
    <property type="molecule type" value="Genomic_DNA"/>
</dbReference>
<dbReference type="PIR" id="T10259">
    <property type="entry name" value="T10259"/>
</dbReference>
<dbReference type="SMR" id="Q03278"/>
<dbReference type="InParanoid" id="Q03278"/>
<dbReference type="Proteomes" id="UP000002358">
    <property type="component" value="Unplaced"/>
</dbReference>
<dbReference type="GO" id="GO:0004519">
    <property type="term" value="F:endonuclease activity"/>
    <property type="evidence" value="ECO:0007669"/>
    <property type="project" value="UniProtKB-KW"/>
</dbReference>
<dbReference type="GO" id="GO:0003964">
    <property type="term" value="F:RNA-directed DNA polymerase activity"/>
    <property type="evidence" value="ECO:0007669"/>
    <property type="project" value="UniProtKB-KW"/>
</dbReference>
<dbReference type="GO" id="GO:0008270">
    <property type="term" value="F:zinc ion binding"/>
    <property type="evidence" value="ECO:0007669"/>
    <property type="project" value="UniProtKB-KW"/>
</dbReference>
<dbReference type="CDD" id="cd01650">
    <property type="entry name" value="RT_nLTR_like"/>
    <property type="match status" value="1"/>
</dbReference>
<dbReference type="Gene3D" id="3.30.70.270">
    <property type="match status" value="1"/>
</dbReference>
<dbReference type="InterPro" id="IPR043502">
    <property type="entry name" value="DNA/RNA_pol_sf"/>
</dbReference>
<dbReference type="InterPro" id="IPR043128">
    <property type="entry name" value="Rev_trsase/Diguanyl_cyclase"/>
</dbReference>
<dbReference type="InterPro" id="IPR000477">
    <property type="entry name" value="RT_dom"/>
</dbReference>
<dbReference type="InterPro" id="IPR013087">
    <property type="entry name" value="Znf_C2H2_type"/>
</dbReference>
<dbReference type="PANTHER" id="PTHR19446">
    <property type="entry name" value="REVERSE TRANSCRIPTASES"/>
    <property type="match status" value="1"/>
</dbReference>
<dbReference type="Pfam" id="PF00078">
    <property type="entry name" value="RVT_1"/>
    <property type="match status" value="1"/>
</dbReference>
<dbReference type="SUPFAM" id="SSF56672">
    <property type="entry name" value="DNA/RNA polymerases"/>
    <property type="match status" value="1"/>
</dbReference>
<dbReference type="PROSITE" id="PS50878">
    <property type="entry name" value="RT_POL"/>
    <property type="match status" value="1"/>
</dbReference>
<dbReference type="PROSITE" id="PS00028">
    <property type="entry name" value="ZINC_FINGER_C2H2_1"/>
    <property type="match status" value="1"/>
</dbReference>
<dbReference type="PROSITE" id="PS50157">
    <property type="entry name" value="ZINC_FINGER_C2H2_2"/>
    <property type="match status" value="1"/>
</dbReference>
<name>PO21_NASVI</name>
<accession>Q03278</accession>
<reference key="1">
    <citation type="journal article" date="1993" name="Mol. Biol. Evol.">
        <title>Sequence relationship of retrotransposable elements R1 and R2 within and between divergent insect species.</title>
        <authorList>
            <person name="Burke W.D."/>
            <person name="Eickbush D.G."/>
            <person name="Xiong Y."/>
            <person name="Jakubczak J.L."/>
            <person name="Eickbush T.H."/>
        </authorList>
    </citation>
    <scope>NUCLEOTIDE SEQUENCE [GENOMIC DNA]</scope>
</reference>
<reference key="2">
    <citation type="submission" date="1997-08" db="EMBL/GenBank/DDBJ databases">
        <authorList>
            <person name="Burke W.D."/>
            <person name="Eickbush D.G."/>
            <person name="Xiong Y."/>
            <person name="Jakubczak J.L."/>
            <person name="Eickbush T.H."/>
        </authorList>
    </citation>
    <scope>SEQUENCE REVISION</scope>
</reference>
<sequence>NQIKKSNTSTGARIPKAMTNPADNFAGGQWKPPGRRSARTSATGMFVCEHCLRAFTTNTGRGLHIKRAHEEQANEAITTERSRARWTNEEMEAVQAEIDCEGRTAINQEILRIIPYQRTIDAIKCLRKQQKYKTIRERVANRRAENRARETELTRLETADEDPASQEQDNPNMSLKNWLKEVIESDDDRLCADLRTAIEMALAGQSPLDVCTVGCYQYTMTNLPLVPVRLGGPIYWCNAQSRSNPGETQRRQTIKESNNSWKKNMSKAAHIVLDGDTDACPAGLEGTEASGAIMRAGCPTTRHLRSRMQGEIKNLWRPISNDEIKEVEACKRTAAGPDGMTTTAWNSIDECIKSLFNMIMYHGQCPRRYLDSRTVLIPKEPGTMDPACFRPLSIASVALRHFHRILANRIGEHGLLDTRQRAFIVADGVAENTSLLSAMIKEARMKIKGLYIAILDVKKAFDSVEHRSILDALRRKKLPLEMRNYIMWVYRNSKTRLEVVKTKGRWIRPARGVRQGDPLSPLLFNCVMDAVLRRLPENTGFLMGAEKIGALVFADDLVLLAETREGLQASLSRIEAGLQEQGLEMMPRKCHTLALVPSGKEKKIKVETHKPFTVGNQEITQLGHADQWKYLGVVYNSYGPIQVKINIAGDLQRVTAAPLKPQQRMAILGMFLIPRFIHKLVLGRTSNADVRKGDKIIRKTVRGWLRLPHDTPIGYFHAPIKEGGLGIPAFESRIPELLKSRIEALGASNMQTARSLLGGDWVAERKKWINTQKIKNSEWAQKLHLTTDGKDLRDTRKAEASYSWIRDIHVAIPASVWIKYHHTRINALPTLMRMSRGRRTNGNALCRAGCGLPETLYHVVQQCPRTHGGRVLRHDKIAEQVAIFMQEKGWLVLREAHIRTSVGLRKPDIIARKGQDCKIIDCQIVTTGNDIRIQHERKIQYYASNWELRRSAATMIGHQGQVSVEAITISWKGVWEPRSYCLLRDCGIPKVKIKGLTTRVLLGAYLNFNTFSKATYRTERRRTAN</sequence>
<comment type="catalytic activity">
    <reaction evidence="2">
        <text>DNA(n) + a 2'-deoxyribonucleoside 5'-triphosphate = DNA(n+1) + diphosphate</text>
        <dbReference type="Rhea" id="RHEA:22508"/>
        <dbReference type="Rhea" id="RHEA-COMP:17339"/>
        <dbReference type="Rhea" id="RHEA-COMP:17340"/>
        <dbReference type="ChEBI" id="CHEBI:33019"/>
        <dbReference type="ChEBI" id="CHEBI:61560"/>
        <dbReference type="ChEBI" id="CHEBI:173112"/>
        <dbReference type="EC" id="2.7.7.49"/>
    </reaction>
</comment>
<protein>
    <recommendedName>
        <fullName>Retrovirus-related Pol polyprotein from type-1 retrotransposable element R2</fullName>
    </recommendedName>
    <alternativeName>
        <fullName>Retrovirus-related Pol polyprotein from type I retrotransposable element R2</fullName>
    </alternativeName>
    <domain>
        <recommendedName>
            <fullName>Reverse transcriptase</fullName>
            <ecNumber>2.7.7.49</ecNumber>
        </recommendedName>
    </domain>
    <domain>
        <recommendedName>
            <fullName>Endonuclease</fullName>
        </recommendedName>
    </domain>
</protein>
<organism>
    <name type="scientific">Nasonia vitripennis</name>
    <name type="common">Parasitic wasp</name>
    <dbReference type="NCBI Taxonomy" id="7425"/>
    <lineage>
        <taxon>Eukaryota</taxon>
        <taxon>Metazoa</taxon>
        <taxon>Ecdysozoa</taxon>
        <taxon>Arthropoda</taxon>
        <taxon>Hexapoda</taxon>
        <taxon>Insecta</taxon>
        <taxon>Pterygota</taxon>
        <taxon>Neoptera</taxon>
        <taxon>Endopterygota</taxon>
        <taxon>Hymenoptera</taxon>
        <taxon>Apocrita</taxon>
        <taxon>Proctotrupomorpha</taxon>
        <taxon>Chalcidoidea</taxon>
        <taxon>Pteromalidae</taxon>
        <taxon>Pteromalinae</taxon>
        <taxon>Nasonia</taxon>
    </lineage>
</organism>
<keyword id="KW-0255">Endonuclease</keyword>
<keyword id="KW-0378">Hydrolase</keyword>
<keyword id="KW-0479">Metal-binding</keyword>
<keyword id="KW-0540">Nuclease</keyword>
<keyword id="KW-0548">Nucleotidyltransferase</keyword>
<keyword id="KW-1185">Reference proteome</keyword>
<keyword id="KW-0695">RNA-directed DNA polymerase</keyword>
<keyword id="KW-0808">Transferase</keyword>
<keyword id="KW-0814">Transposable element</keyword>
<keyword id="KW-0862">Zinc</keyword>
<keyword id="KW-0863">Zinc-finger</keyword>